<name>NTPPA_RHORT</name>
<proteinExistence type="inferred from homology"/>
<comment type="function">
    <text evidence="1">Nucleoside triphosphate pyrophosphatase that hydrolyzes dTTP and UTP. May have a dual role in cell division arrest and in preventing the incorporation of modified nucleotides into cellular nucleic acids.</text>
</comment>
<comment type="catalytic activity">
    <reaction evidence="1">
        <text>dTTP + H2O = dTMP + diphosphate + H(+)</text>
        <dbReference type="Rhea" id="RHEA:28534"/>
        <dbReference type="ChEBI" id="CHEBI:15377"/>
        <dbReference type="ChEBI" id="CHEBI:15378"/>
        <dbReference type="ChEBI" id="CHEBI:33019"/>
        <dbReference type="ChEBI" id="CHEBI:37568"/>
        <dbReference type="ChEBI" id="CHEBI:63528"/>
        <dbReference type="EC" id="3.6.1.9"/>
    </reaction>
</comment>
<comment type="catalytic activity">
    <reaction evidence="1">
        <text>UTP + H2O = UMP + diphosphate + H(+)</text>
        <dbReference type="Rhea" id="RHEA:29395"/>
        <dbReference type="ChEBI" id="CHEBI:15377"/>
        <dbReference type="ChEBI" id="CHEBI:15378"/>
        <dbReference type="ChEBI" id="CHEBI:33019"/>
        <dbReference type="ChEBI" id="CHEBI:46398"/>
        <dbReference type="ChEBI" id="CHEBI:57865"/>
        <dbReference type="EC" id="3.6.1.9"/>
    </reaction>
</comment>
<comment type="cofactor">
    <cofactor evidence="1">
        <name>a divalent metal cation</name>
        <dbReference type="ChEBI" id="CHEBI:60240"/>
    </cofactor>
</comment>
<comment type="subcellular location">
    <subcellularLocation>
        <location evidence="1">Cytoplasm</location>
    </subcellularLocation>
</comment>
<comment type="similarity">
    <text evidence="1">Belongs to the Maf family. YhdE subfamily.</text>
</comment>
<feature type="chain" id="PRO_0000267408" description="dTTP/UTP pyrophosphatase">
    <location>
        <begin position="1"/>
        <end position="210"/>
    </location>
</feature>
<feature type="region of interest" description="Disordered" evidence="2">
    <location>
        <begin position="1"/>
        <end position="22"/>
    </location>
</feature>
<feature type="compositionally biased region" description="Basic and acidic residues" evidence="2">
    <location>
        <begin position="1"/>
        <end position="15"/>
    </location>
</feature>
<feature type="active site" description="Proton acceptor" evidence="1">
    <location>
        <position position="86"/>
    </location>
</feature>
<feature type="site" description="Important for substrate specificity" evidence="1">
    <location>
        <position position="28"/>
    </location>
</feature>
<feature type="site" description="Important for substrate specificity" evidence="1">
    <location>
        <position position="87"/>
    </location>
</feature>
<feature type="site" description="Important for substrate specificity" evidence="1">
    <location>
        <position position="170"/>
    </location>
</feature>
<dbReference type="EC" id="3.6.1.9" evidence="1"/>
<dbReference type="EMBL" id="CP000230">
    <property type="protein sequence ID" value="ABC23565.1"/>
    <property type="molecule type" value="Genomic_DNA"/>
</dbReference>
<dbReference type="RefSeq" id="WP_011390578.1">
    <property type="nucleotide sequence ID" value="NC_007643.1"/>
</dbReference>
<dbReference type="RefSeq" id="YP_427852.1">
    <property type="nucleotide sequence ID" value="NC_007643.1"/>
</dbReference>
<dbReference type="SMR" id="Q2RQN0"/>
<dbReference type="STRING" id="269796.Rru_A2768"/>
<dbReference type="EnsemblBacteria" id="ABC23565">
    <property type="protein sequence ID" value="ABC23565"/>
    <property type="gene ID" value="Rru_A2768"/>
</dbReference>
<dbReference type="KEGG" id="rru:Rru_A2768"/>
<dbReference type="PATRIC" id="fig|269796.9.peg.2874"/>
<dbReference type="eggNOG" id="COG0424">
    <property type="taxonomic scope" value="Bacteria"/>
</dbReference>
<dbReference type="HOGENOM" id="CLU_040416_2_0_5"/>
<dbReference type="PhylomeDB" id="Q2RQN0"/>
<dbReference type="Proteomes" id="UP000001929">
    <property type="component" value="Chromosome"/>
</dbReference>
<dbReference type="GO" id="GO:0005737">
    <property type="term" value="C:cytoplasm"/>
    <property type="evidence" value="ECO:0007669"/>
    <property type="project" value="UniProtKB-SubCell"/>
</dbReference>
<dbReference type="GO" id="GO:0036218">
    <property type="term" value="F:dTTP diphosphatase activity"/>
    <property type="evidence" value="ECO:0007669"/>
    <property type="project" value="RHEA"/>
</dbReference>
<dbReference type="GO" id="GO:0036221">
    <property type="term" value="F:UTP diphosphatase activity"/>
    <property type="evidence" value="ECO:0007669"/>
    <property type="project" value="RHEA"/>
</dbReference>
<dbReference type="GO" id="GO:0009117">
    <property type="term" value="P:nucleotide metabolic process"/>
    <property type="evidence" value="ECO:0007669"/>
    <property type="project" value="UniProtKB-KW"/>
</dbReference>
<dbReference type="CDD" id="cd00555">
    <property type="entry name" value="Maf"/>
    <property type="match status" value="1"/>
</dbReference>
<dbReference type="Gene3D" id="3.90.950.10">
    <property type="match status" value="1"/>
</dbReference>
<dbReference type="HAMAP" id="MF_00528">
    <property type="entry name" value="Maf"/>
    <property type="match status" value="1"/>
</dbReference>
<dbReference type="InterPro" id="IPR029001">
    <property type="entry name" value="ITPase-like_fam"/>
</dbReference>
<dbReference type="InterPro" id="IPR003697">
    <property type="entry name" value="Maf-like"/>
</dbReference>
<dbReference type="NCBIfam" id="TIGR00172">
    <property type="entry name" value="maf"/>
    <property type="match status" value="1"/>
</dbReference>
<dbReference type="PANTHER" id="PTHR43213">
    <property type="entry name" value="BIFUNCTIONAL DTTP/UTP PYROPHOSPHATASE/METHYLTRANSFERASE PROTEIN-RELATED"/>
    <property type="match status" value="1"/>
</dbReference>
<dbReference type="PANTHER" id="PTHR43213:SF5">
    <property type="entry name" value="BIFUNCTIONAL DTTP_UTP PYROPHOSPHATASE_METHYLTRANSFERASE PROTEIN-RELATED"/>
    <property type="match status" value="1"/>
</dbReference>
<dbReference type="Pfam" id="PF02545">
    <property type="entry name" value="Maf"/>
    <property type="match status" value="1"/>
</dbReference>
<dbReference type="PIRSF" id="PIRSF006305">
    <property type="entry name" value="Maf"/>
    <property type="match status" value="1"/>
</dbReference>
<dbReference type="SUPFAM" id="SSF52972">
    <property type="entry name" value="ITPase-like"/>
    <property type="match status" value="1"/>
</dbReference>
<evidence type="ECO:0000255" key="1">
    <source>
        <dbReference type="HAMAP-Rule" id="MF_00528"/>
    </source>
</evidence>
<evidence type="ECO:0000256" key="2">
    <source>
        <dbReference type="SAM" id="MobiDB-lite"/>
    </source>
</evidence>
<reference key="1">
    <citation type="journal article" date="2011" name="Stand. Genomic Sci.">
        <title>Complete genome sequence of Rhodospirillum rubrum type strain (S1).</title>
        <authorList>
            <person name="Munk A.C."/>
            <person name="Copeland A."/>
            <person name="Lucas S."/>
            <person name="Lapidus A."/>
            <person name="Del Rio T.G."/>
            <person name="Barry K."/>
            <person name="Detter J.C."/>
            <person name="Hammon N."/>
            <person name="Israni S."/>
            <person name="Pitluck S."/>
            <person name="Brettin T."/>
            <person name="Bruce D."/>
            <person name="Han C."/>
            <person name="Tapia R."/>
            <person name="Gilna P."/>
            <person name="Schmutz J."/>
            <person name="Larimer F."/>
            <person name="Land M."/>
            <person name="Kyrpides N.C."/>
            <person name="Mavromatis K."/>
            <person name="Richardson P."/>
            <person name="Rohde M."/>
            <person name="Goeker M."/>
            <person name="Klenk H.P."/>
            <person name="Zhang Y."/>
            <person name="Roberts G.P."/>
            <person name="Reslewic S."/>
            <person name="Schwartz D.C."/>
        </authorList>
    </citation>
    <scope>NUCLEOTIDE SEQUENCE [LARGE SCALE GENOMIC DNA]</scope>
    <source>
        <strain>ATCC 11170 / ATH 1.1.1 / DSM 467 / LMG 4362 / NCIMB 8255 / S1</strain>
    </source>
</reference>
<gene>
    <name type="ordered locus">Rru_A2768</name>
</gene>
<keyword id="KW-0963">Cytoplasm</keyword>
<keyword id="KW-0378">Hydrolase</keyword>
<keyword id="KW-0546">Nucleotide metabolism</keyword>
<keyword id="KW-1185">Reference proteome</keyword>
<organism>
    <name type="scientific">Rhodospirillum rubrum (strain ATCC 11170 / ATH 1.1.1 / DSM 467 / LMG 4362 / NCIMB 8255 / S1)</name>
    <dbReference type="NCBI Taxonomy" id="269796"/>
    <lineage>
        <taxon>Bacteria</taxon>
        <taxon>Pseudomonadati</taxon>
        <taxon>Pseudomonadota</taxon>
        <taxon>Alphaproteobacteria</taxon>
        <taxon>Rhodospirillales</taxon>
        <taxon>Rhodospirillaceae</taxon>
        <taxon>Rhodospirillum</taxon>
    </lineage>
</organism>
<protein>
    <recommendedName>
        <fullName evidence="1">dTTP/UTP pyrophosphatase</fullName>
        <shortName evidence="1">dTTPase/UTPase</shortName>
        <ecNumber evidence="1">3.6.1.9</ecNumber>
    </recommendedName>
    <alternativeName>
        <fullName evidence="1">Nucleoside triphosphate pyrophosphatase</fullName>
    </alternativeName>
    <alternativeName>
        <fullName evidence="1">Nucleotide pyrophosphatase</fullName>
        <shortName evidence="1">Nucleotide PPase</shortName>
    </alternativeName>
</protein>
<accession>Q2RQN0</accession>
<sequence length="210" mass="22256">MTHGDNRDGPGRETRSSGPLVLASASPRRVDLLAQIGLVPDAIDPADLDETPAADELPRPYAERVARAKALAVAPRHPGAWVLAGDTVVARGRRILPKAEDAKTAKTCLEMLSGARHRVIGAIALVTPEGRLIERSVVSQVAFKRLSAAEIAEYLAGDEWRGKAGGYAIQGRAAAFVRWLEGSHSNVVGLPLFETNALLAGTGYRPGRDG</sequence>